<reference key="1">
    <citation type="journal article" date="1991" name="Plant Cell">
        <title>Characterization of cis-acting sequences regulating root-specific gene expression in tobacco.</title>
        <authorList>
            <person name="Yamamoto Y.T."/>
            <person name="Taylor C.G."/>
            <person name="Acedo G.N."/>
            <person name="Cheng C.-L."/>
            <person name="Conkling M.A."/>
        </authorList>
    </citation>
    <scope>NUCLEOTIDE SEQUENCE</scope>
    <source>
        <tissue>Root</tissue>
    </source>
</reference>
<protein>
    <recommendedName>
        <fullName>Probable aquaporin TIP-type RB7-18C</fullName>
    </recommendedName>
    <alternativeName>
        <fullName>RT-TIP</fullName>
    </alternativeName>
    <alternativeName>
        <fullName>TobRB7</fullName>
    </alternativeName>
    <alternativeName>
        <fullName>Tonoplast intrinsic protein, root-specific RB7-18C</fullName>
    </alternativeName>
</protein>
<sequence length="250" mass="25224">MVLIAFGSIGDSFSVGSLKAYVAEFIATLLFVFAGVGSAIAYNKLTADAALDPAGLVAVAVAHAFALFVGVSIAANISGGHLNPAVTLGLAVGGNITILTGFFYWIAQLLGSTVACLLLKYVTNGLAVPTHGVAAGLNGFQGVVMEIIITFALVYTVYATAADPKKGSLGTIAPIAIGFIVGANILAAGPFSGGSMNPARSFGPAVVAGDFSQNWIYWAGPLIGGGLAGFIYGDVFIGCHTPLPTSEDYA</sequence>
<accession>P24422</accession>
<name>TIP2_TOBAC</name>
<comment type="function">
    <text>Channel protein in tonoplast. These proteins may allow the diffusion of amino acids and/or peptides from the vacuolar compartment to the cytoplasm.</text>
</comment>
<comment type="subcellular location">
    <subcellularLocation>
        <location>Vacuole membrane</location>
        <topology>Multi-pass membrane protein</topology>
    </subcellularLocation>
    <text>Tonoplast.</text>
</comment>
<comment type="tissue specificity">
    <text>Roots.</text>
</comment>
<comment type="domain">
    <text>Aquaporins contain two tandem repeats each containing three membrane-spanning domains and a pore-forming loop with the signature motif Asn-Pro-Ala (NPA).</text>
</comment>
<comment type="similarity">
    <text evidence="2">Belongs to the MIP/aquaporin (TC 1.A.8) family. TIP (TC 1.A.8.10) subfamily.</text>
</comment>
<keyword id="KW-0472">Membrane</keyword>
<keyword id="KW-1185">Reference proteome</keyword>
<keyword id="KW-0677">Repeat</keyword>
<keyword id="KW-0812">Transmembrane</keyword>
<keyword id="KW-1133">Transmembrane helix</keyword>
<keyword id="KW-0813">Transport</keyword>
<keyword id="KW-0926">Vacuole</keyword>
<dbReference type="PIR" id="JQ1012">
    <property type="entry name" value="JQ1012"/>
</dbReference>
<dbReference type="SMR" id="P24422"/>
<dbReference type="STRING" id="4097.P24422"/>
<dbReference type="PaxDb" id="4097-P24422"/>
<dbReference type="ProMEX" id="P24422"/>
<dbReference type="Proteomes" id="UP000084051">
    <property type="component" value="Unplaced"/>
</dbReference>
<dbReference type="GO" id="GO:0009705">
    <property type="term" value="C:plant-type vacuole membrane"/>
    <property type="evidence" value="ECO:0000318"/>
    <property type="project" value="GO_Central"/>
</dbReference>
<dbReference type="GO" id="GO:0015250">
    <property type="term" value="F:water channel activity"/>
    <property type="evidence" value="ECO:0000318"/>
    <property type="project" value="GO_Central"/>
</dbReference>
<dbReference type="GO" id="GO:0006833">
    <property type="term" value="P:water transport"/>
    <property type="evidence" value="ECO:0000318"/>
    <property type="project" value="GO_Central"/>
</dbReference>
<dbReference type="CDD" id="cd00333">
    <property type="entry name" value="MIP"/>
    <property type="match status" value="1"/>
</dbReference>
<dbReference type="FunFam" id="1.20.1080.10:FF:000002">
    <property type="entry name" value="Probable aquaporin TIP1-1"/>
    <property type="match status" value="1"/>
</dbReference>
<dbReference type="Gene3D" id="1.20.1080.10">
    <property type="entry name" value="Glycerol uptake facilitator protein"/>
    <property type="match status" value="1"/>
</dbReference>
<dbReference type="InterPro" id="IPR023271">
    <property type="entry name" value="Aquaporin-like"/>
</dbReference>
<dbReference type="InterPro" id="IPR034294">
    <property type="entry name" value="Aquaporin_transptr"/>
</dbReference>
<dbReference type="InterPro" id="IPR000425">
    <property type="entry name" value="MIP"/>
</dbReference>
<dbReference type="InterPro" id="IPR022357">
    <property type="entry name" value="MIP_CS"/>
</dbReference>
<dbReference type="NCBIfam" id="TIGR00861">
    <property type="entry name" value="MIP"/>
    <property type="match status" value="1"/>
</dbReference>
<dbReference type="PANTHER" id="PTHR45665:SF37">
    <property type="entry name" value="AQUAPORIN TIP2-3-RELATED"/>
    <property type="match status" value="1"/>
</dbReference>
<dbReference type="PANTHER" id="PTHR45665">
    <property type="entry name" value="AQUAPORIN-8"/>
    <property type="match status" value="1"/>
</dbReference>
<dbReference type="Pfam" id="PF00230">
    <property type="entry name" value="MIP"/>
    <property type="match status" value="1"/>
</dbReference>
<dbReference type="PRINTS" id="PR00783">
    <property type="entry name" value="MINTRINSICP"/>
</dbReference>
<dbReference type="SUPFAM" id="SSF81338">
    <property type="entry name" value="Aquaporin-like"/>
    <property type="match status" value="1"/>
</dbReference>
<dbReference type="PROSITE" id="PS00221">
    <property type="entry name" value="MIP"/>
    <property type="match status" value="1"/>
</dbReference>
<proteinExistence type="evidence at transcript level"/>
<organism>
    <name type="scientific">Nicotiana tabacum</name>
    <name type="common">Common tobacco</name>
    <dbReference type="NCBI Taxonomy" id="4097"/>
    <lineage>
        <taxon>Eukaryota</taxon>
        <taxon>Viridiplantae</taxon>
        <taxon>Streptophyta</taxon>
        <taxon>Embryophyta</taxon>
        <taxon>Tracheophyta</taxon>
        <taxon>Spermatophyta</taxon>
        <taxon>Magnoliopsida</taxon>
        <taxon>eudicotyledons</taxon>
        <taxon>Gunneridae</taxon>
        <taxon>Pentapetalae</taxon>
        <taxon>asterids</taxon>
        <taxon>lamiids</taxon>
        <taxon>Solanales</taxon>
        <taxon>Solanaceae</taxon>
        <taxon>Nicotianoideae</taxon>
        <taxon>Nicotianeae</taxon>
        <taxon>Nicotiana</taxon>
    </lineage>
</organism>
<evidence type="ECO:0000255" key="1"/>
<evidence type="ECO:0000305" key="2"/>
<feature type="chain" id="PRO_0000064044" description="Probable aquaporin TIP-type RB7-18C">
    <location>
        <begin position="1"/>
        <end position="250"/>
    </location>
</feature>
<feature type="transmembrane region" description="Helical; Name=1" evidence="1">
    <location>
        <begin position="20"/>
        <end position="42"/>
    </location>
</feature>
<feature type="transmembrane region" description="Helical; Name=2" evidence="1">
    <location>
        <begin position="55"/>
        <end position="77"/>
    </location>
</feature>
<feature type="transmembrane region" description="Helical; Name=3" evidence="1">
    <location>
        <begin position="97"/>
        <end position="119"/>
    </location>
</feature>
<feature type="transmembrane region" description="Helical; Name=4" evidence="1">
    <location>
        <begin position="140"/>
        <end position="162"/>
    </location>
</feature>
<feature type="transmembrane region" description="Helical; Name=5" evidence="1">
    <location>
        <begin position="172"/>
        <end position="194"/>
    </location>
</feature>
<feature type="transmembrane region" description="Helical; Name=6" evidence="1">
    <location>
        <begin position="215"/>
        <end position="237"/>
    </location>
</feature>
<feature type="short sequence motif" description="NPA 1">
    <location>
        <begin position="83"/>
        <end position="85"/>
    </location>
</feature>
<feature type="short sequence motif" description="NPA 2">
    <location>
        <begin position="197"/>
        <end position="199"/>
    </location>
</feature>